<feature type="chain" id="PRO_0000298724" description="Pyrimidine/purine nucleoside phosphorylase">
    <location>
        <begin position="1"/>
        <end position="103"/>
    </location>
</feature>
<gene>
    <name evidence="1" type="primary">ppnP</name>
    <name type="ordered locus">Sfri_0323</name>
</gene>
<proteinExistence type="inferred from homology"/>
<sequence length="103" mass="11370">MSMLQQVSVAKKANVYFNGKVISRSVVLADGSKQTFGVVLPGEYEFSTAQGEIMQVISGKFDVLLPGKTEWVAYAEASQFELAPNVSFSIRTDQISEYCCQYI</sequence>
<protein>
    <recommendedName>
        <fullName evidence="1">Pyrimidine/purine nucleoside phosphorylase</fullName>
        <ecNumber evidence="1">2.4.2.1</ecNumber>
        <ecNumber evidence="1">2.4.2.2</ecNumber>
    </recommendedName>
    <alternativeName>
        <fullName evidence="1">Adenosine phosphorylase</fullName>
    </alternativeName>
    <alternativeName>
        <fullName evidence="1">Cytidine phosphorylase</fullName>
    </alternativeName>
    <alternativeName>
        <fullName evidence="1">Guanosine phosphorylase</fullName>
    </alternativeName>
    <alternativeName>
        <fullName evidence="1">Inosine phosphorylase</fullName>
    </alternativeName>
    <alternativeName>
        <fullName evidence="1">Thymidine phosphorylase</fullName>
    </alternativeName>
    <alternativeName>
        <fullName evidence="1">Uridine phosphorylase</fullName>
    </alternativeName>
    <alternativeName>
        <fullName evidence="1">Xanthosine phosphorylase</fullName>
    </alternativeName>
</protein>
<evidence type="ECO:0000255" key="1">
    <source>
        <dbReference type="HAMAP-Rule" id="MF_01537"/>
    </source>
</evidence>
<comment type="function">
    <text evidence="1">Catalyzes the phosphorolysis of diverse nucleosides, yielding D-ribose 1-phosphate and the respective free bases. Can use uridine, adenosine, guanosine, cytidine, thymidine, inosine and xanthosine as substrates. Also catalyzes the reverse reactions.</text>
</comment>
<comment type="catalytic activity">
    <reaction evidence="1">
        <text>a purine D-ribonucleoside + phosphate = a purine nucleobase + alpha-D-ribose 1-phosphate</text>
        <dbReference type="Rhea" id="RHEA:19805"/>
        <dbReference type="ChEBI" id="CHEBI:26386"/>
        <dbReference type="ChEBI" id="CHEBI:43474"/>
        <dbReference type="ChEBI" id="CHEBI:57720"/>
        <dbReference type="ChEBI" id="CHEBI:142355"/>
        <dbReference type="EC" id="2.4.2.1"/>
    </reaction>
</comment>
<comment type="catalytic activity">
    <reaction evidence="1">
        <text>adenosine + phosphate = alpha-D-ribose 1-phosphate + adenine</text>
        <dbReference type="Rhea" id="RHEA:27642"/>
        <dbReference type="ChEBI" id="CHEBI:16335"/>
        <dbReference type="ChEBI" id="CHEBI:16708"/>
        <dbReference type="ChEBI" id="CHEBI:43474"/>
        <dbReference type="ChEBI" id="CHEBI:57720"/>
        <dbReference type="EC" id="2.4.2.1"/>
    </reaction>
</comment>
<comment type="catalytic activity">
    <reaction evidence="1">
        <text>cytidine + phosphate = cytosine + alpha-D-ribose 1-phosphate</text>
        <dbReference type="Rhea" id="RHEA:52540"/>
        <dbReference type="ChEBI" id="CHEBI:16040"/>
        <dbReference type="ChEBI" id="CHEBI:17562"/>
        <dbReference type="ChEBI" id="CHEBI:43474"/>
        <dbReference type="ChEBI" id="CHEBI:57720"/>
        <dbReference type="EC" id="2.4.2.2"/>
    </reaction>
</comment>
<comment type="catalytic activity">
    <reaction evidence="1">
        <text>guanosine + phosphate = alpha-D-ribose 1-phosphate + guanine</text>
        <dbReference type="Rhea" id="RHEA:13233"/>
        <dbReference type="ChEBI" id="CHEBI:16235"/>
        <dbReference type="ChEBI" id="CHEBI:16750"/>
        <dbReference type="ChEBI" id="CHEBI:43474"/>
        <dbReference type="ChEBI" id="CHEBI:57720"/>
        <dbReference type="EC" id="2.4.2.1"/>
    </reaction>
</comment>
<comment type="catalytic activity">
    <reaction evidence="1">
        <text>inosine + phosphate = alpha-D-ribose 1-phosphate + hypoxanthine</text>
        <dbReference type="Rhea" id="RHEA:27646"/>
        <dbReference type="ChEBI" id="CHEBI:17368"/>
        <dbReference type="ChEBI" id="CHEBI:17596"/>
        <dbReference type="ChEBI" id="CHEBI:43474"/>
        <dbReference type="ChEBI" id="CHEBI:57720"/>
        <dbReference type="EC" id="2.4.2.1"/>
    </reaction>
</comment>
<comment type="catalytic activity">
    <reaction evidence="1">
        <text>thymidine + phosphate = 2-deoxy-alpha-D-ribose 1-phosphate + thymine</text>
        <dbReference type="Rhea" id="RHEA:16037"/>
        <dbReference type="ChEBI" id="CHEBI:17748"/>
        <dbReference type="ChEBI" id="CHEBI:17821"/>
        <dbReference type="ChEBI" id="CHEBI:43474"/>
        <dbReference type="ChEBI" id="CHEBI:57259"/>
        <dbReference type="EC" id="2.4.2.2"/>
    </reaction>
</comment>
<comment type="catalytic activity">
    <reaction evidence="1">
        <text>uridine + phosphate = alpha-D-ribose 1-phosphate + uracil</text>
        <dbReference type="Rhea" id="RHEA:24388"/>
        <dbReference type="ChEBI" id="CHEBI:16704"/>
        <dbReference type="ChEBI" id="CHEBI:17568"/>
        <dbReference type="ChEBI" id="CHEBI:43474"/>
        <dbReference type="ChEBI" id="CHEBI:57720"/>
        <dbReference type="EC" id="2.4.2.2"/>
    </reaction>
</comment>
<comment type="catalytic activity">
    <reaction evidence="1">
        <text>xanthosine + phosphate = alpha-D-ribose 1-phosphate + xanthine</text>
        <dbReference type="Rhea" id="RHEA:27638"/>
        <dbReference type="ChEBI" id="CHEBI:17712"/>
        <dbReference type="ChEBI" id="CHEBI:18107"/>
        <dbReference type="ChEBI" id="CHEBI:43474"/>
        <dbReference type="ChEBI" id="CHEBI:57720"/>
        <dbReference type="EC" id="2.4.2.1"/>
    </reaction>
</comment>
<comment type="similarity">
    <text evidence="1">Belongs to the nucleoside phosphorylase PpnP family.</text>
</comment>
<organism>
    <name type="scientific">Shewanella frigidimarina (strain NCIMB 400)</name>
    <dbReference type="NCBI Taxonomy" id="318167"/>
    <lineage>
        <taxon>Bacteria</taxon>
        <taxon>Pseudomonadati</taxon>
        <taxon>Pseudomonadota</taxon>
        <taxon>Gammaproteobacteria</taxon>
        <taxon>Alteromonadales</taxon>
        <taxon>Shewanellaceae</taxon>
        <taxon>Shewanella</taxon>
    </lineage>
</organism>
<reference key="1">
    <citation type="submission" date="2006-08" db="EMBL/GenBank/DDBJ databases">
        <title>Complete sequence of Shewanella frigidimarina NCIMB 400.</title>
        <authorList>
            <consortium name="US DOE Joint Genome Institute"/>
            <person name="Copeland A."/>
            <person name="Lucas S."/>
            <person name="Lapidus A."/>
            <person name="Barry K."/>
            <person name="Detter J.C."/>
            <person name="Glavina del Rio T."/>
            <person name="Hammon N."/>
            <person name="Israni S."/>
            <person name="Dalin E."/>
            <person name="Tice H."/>
            <person name="Pitluck S."/>
            <person name="Fredrickson J.K."/>
            <person name="Kolker E."/>
            <person name="McCuel L.A."/>
            <person name="DiChristina T."/>
            <person name="Nealson K.H."/>
            <person name="Newman D."/>
            <person name="Tiedje J.M."/>
            <person name="Zhou J."/>
            <person name="Romine M.F."/>
            <person name="Culley D.E."/>
            <person name="Serres M."/>
            <person name="Chertkov O."/>
            <person name="Brettin T."/>
            <person name="Bruce D."/>
            <person name="Han C."/>
            <person name="Tapia R."/>
            <person name="Gilna P."/>
            <person name="Schmutz J."/>
            <person name="Larimer F."/>
            <person name="Land M."/>
            <person name="Hauser L."/>
            <person name="Kyrpides N."/>
            <person name="Mikhailova N."/>
            <person name="Richardson P."/>
        </authorList>
    </citation>
    <scope>NUCLEOTIDE SEQUENCE [LARGE SCALE GENOMIC DNA]</scope>
    <source>
        <strain>NCIMB 400</strain>
    </source>
</reference>
<accession>Q088X9</accession>
<keyword id="KW-0328">Glycosyltransferase</keyword>
<keyword id="KW-1185">Reference proteome</keyword>
<keyword id="KW-0808">Transferase</keyword>
<dbReference type="EC" id="2.4.2.1" evidence="1"/>
<dbReference type="EC" id="2.4.2.2" evidence="1"/>
<dbReference type="EMBL" id="CP000447">
    <property type="protein sequence ID" value="ABI70186.1"/>
    <property type="molecule type" value="Genomic_DNA"/>
</dbReference>
<dbReference type="RefSeq" id="WP_011635813.1">
    <property type="nucleotide sequence ID" value="NC_008345.1"/>
</dbReference>
<dbReference type="SMR" id="Q088X9"/>
<dbReference type="STRING" id="318167.Sfri_0323"/>
<dbReference type="KEGG" id="sfr:Sfri_0323"/>
<dbReference type="eggNOG" id="COG3123">
    <property type="taxonomic scope" value="Bacteria"/>
</dbReference>
<dbReference type="HOGENOM" id="CLU_157874_1_0_6"/>
<dbReference type="OrthoDB" id="9793848at2"/>
<dbReference type="Proteomes" id="UP000000684">
    <property type="component" value="Chromosome"/>
</dbReference>
<dbReference type="GO" id="GO:0005829">
    <property type="term" value="C:cytosol"/>
    <property type="evidence" value="ECO:0007669"/>
    <property type="project" value="TreeGrafter"/>
</dbReference>
<dbReference type="GO" id="GO:0047975">
    <property type="term" value="F:guanosine phosphorylase activity"/>
    <property type="evidence" value="ECO:0007669"/>
    <property type="project" value="UniProtKB-EC"/>
</dbReference>
<dbReference type="GO" id="GO:0004731">
    <property type="term" value="F:purine-nucleoside phosphorylase activity"/>
    <property type="evidence" value="ECO:0007669"/>
    <property type="project" value="UniProtKB-UniRule"/>
</dbReference>
<dbReference type="GO" id="GO:0009032">
    <property type="term" value="F:thymidine phosphorylase activity"/>
    <property type="evidence" value="ECO:0007669"/>
    <property type="project" value="UniProtKB-EC"/>
</dbReference>
<dbReference type="GO" id="GO:0004850">
    <property type="term" value="F:uridine phosphorylase activity"/>
    <property type="evidence" value="ECO:0007669"/>
    <property type="project" value="UniProtKB-EC"/>
</dbReference>
<dbReference type="CDD" id="cd20296">
    <property type="entry name" value="cupin_PpnP-like"/>
    <property type="match status" value="1"/>
</dbReference>
<dbReference type="FunFam" id="2.60.120.10:FF:000016">
    <property type="entry name" value="Pyrimidine/purine nucleoside phosphorylase"/>
    <property type="match status" value="1"/>
</dbReference>
<dbReference type="Gene3D" id="2.60.120.10">
    <property type="entry name" value="Jelly Rolls"/>
    <property type="match status" value="1"/>
</dbReference>
<dbReference type="HAMAP" id="MF_01537">
    <property type="entry name" value="Nucleos_phosphorylase_PpnP"/>
    <property type="match status" value="1"/>
</dbReference>
<dbReference type="InterPro" id="IPR009664">
    <property type="entry name" value="Ppnp"/>
</dbReference>
<dbReference type="InterPro" id="IPR014710">
    <property type="entry name" value="RmlC-like_jellyroll"/>
</dbReference>
<dbReference type="InterPro" id="IPR011051">
    <property type="entry name" value="RmlC_Cupin_sf"/>
</dbReference>
<dbReference type="PANTHER" id="PTHR36540">
    <property type="entry name" value="PYRIMIDINE/PURINE NUCLEOSIDE PHOSPHORYLASE"/>
    <property type="match status" value="1"/>
</dbReference>
<dbReference type="PANTHER" id="PTHR36540:SF1">
    <property type="entry name" value="PYRIMIDINE_PURINE NUCLEOSIDE PHOSPHORYLASE"/>
    <property type="match status" value="1"/>
</dbReference>
<dbReference type="Pfam" id="PF06865">
    <property type="entry name" value="Ppnp"/>
    <property type="match status" value="1"/>
</dbReference>
<dbReference type="SUPFAM" id="SSF51182">
    <property type="entry name" value="RmlC-like cupins"/>
    <property type="match status" value="1"/>
</dbReference>
<name>PPNP_SHEFN</name>